<geneLocation type="chloroplast"/>
<dbReference type="EMBL" id="U38804">
    <property type="protein sequence ID" value="AAC08194.1"/>
    <property type="molecule type" value="Genomic_DNA"/>
</dbReference>
<dbReference type="PIR" id="S73229">
    <property type="entry name" value="S73229"/>
</dbReference>
<dbReference type="RefSeq" id="NP_053918.1">
    <property type="nucleotide sequence ID" value="NC_000925.1"/>
</dbReference>
<dbReference type="SMR" id="P51308"/>
<dbReference type="GeneID" id="809937"/>
<dbReference type="GO" id="GO:0009507">
    <property type="term" value="C:chloroplast"/>
    <property type="evidence" value="ECO:0007669"/>
    <property type="project" value="UniProtKB-SubCell"/>
</dbReference>
<dbReference type="GO" id="GO:0022627">
    <property type="term" value="C:cytosolic small ribosomal subunit"/>
    <property type="evidence" value="ECO:0007669"/>
    <property type="project" value="TreeGrafter"/>
</dbReference>
<dbReference type="GO" id="GO:0019843">
    <property type="term" value="F:rRNA binding"/>
    <property type="evidence" value="ECO:0007669"/>
    <property type="project" value="UniProtKB-UniRule"/>
</dbReference>
<dbReference type="GO" id="GO:0003735">
    <property type="term" value="F:structural constituent of ribosome"/>
    <property type="evidence" value="ECO:0007669"/>
    <property type="project" value="InterPro"/>
</dbReference>
<dbReference type="GO" id="GO:0006412">
    <property type="term" value="P:translation"/>
    <property type="evidence" value="ECO:0007669"/>
    <property type="project" value="UniProtKB-UniRule"/>
</dbReference>
<dbReference type="CDD" id="cd02412">
    <property type="entry name" value="KH-II_30S_S3"/>
    <property type="match status" value="1"/>
</dbReference>
<dbReference type="FunFam" id="3.30.300.20:FF:000001">
    <property type="entry name" value="30S ribosomal protein S3"/>
    <property type="match status" value="1"/>
</dbReference>
<dbReference type="Gene3D" id="3.30.300.20">
    <property type="match status" value="1"/>
</dbReference>
<dbReference type="Gene3D" id="3.30.1140.32">
    <property type="entry name" value="Ribosomal protein S3, C-terminal domain"/>
    <property type="match status" value="1"/>
</dbReference>
<dbReference type="HAMAP" id="MF_01309_B">
    <property type="entry name" value="Ribosomal_uS3_B"/>
    <property type="match status" value="1"/>
</dbReference>
<dbReference type="InterPro" id="IPR004087">
    <property type="entry name" value="KH_dom"/>
</dbReference>
<dbReference type="InterPro" id="IPR015946">
    <property type="entry name" value="KH_dom-like_a/b"/>
</dbReference>
<dbReference type="InterPro" id="IPR004044">
    <property type="entry name" value="KH_dom_type_2"/>
</dbReference>
<dbReference type="InterPro" id="IPR009019">
    <property type="entry name" value="KH_sf_prok-type"/>
</dbReference>
<dbReference type="InterPro" id="IPR036419">
    <property type="entry name" value="Ribosomal_S3_C_sf"/>
</dbReference>
<dbReference type="InterPro" id="IPR005704">
    <property type="entry name" value="Ribosomal_uS3_bac-typ"/>
</dbReference>
<dbReference type="InterPro" id="IPR001351">
    <property type="entry name" value="Ribosomal_uS3_C"/>
</dbReference>
<dbReference type="InterPro" id="IPR018280">
    <property type="entry name" value="Ribosomal_uS3_CS"/>
</dbReference>
<dbReference type="NCBIfam" id="TIGR01009">
    <property type="entry name" value="rpsC_bact"/>
    <property type="match status" value="1"/>
</dbReference>
<dbReference type="PANTHER" id="PTHR11760">
    <property type="entry name" value="30S/40S RIBOSOMAL PROTEIN S3"/>
    <property type="match status" value="1"/>
</dbReference>
<dbReference type="PANTHER" id="PTHR11760:SF19">
    <property type="entry name" value="SMALL RIBOSOMAL SUBUNIT PROTEIN US3C"/>
    <property type="match status" value="1"/>
</dbReference>
<dbReference type="Pfam" id="PF07650">
    <property type="entry name" value="KH_2"/>
    <property type="match status" value="1"/>
</dbReference>
<dbReference type="Pfam" id="PF00189">
    <property type="entry name" value="Ribosomal_S3_C"/>
    <property type="match status" value="1"/>
</dbReference>
<dbReference type="SMART" id="SM00322">
    <property type="entry name" value="KH"/>
    <property type="match status" value="1"/>
</dbReference>
<dbReference type="SUPFAM" id="SSF54814">
    <property type="entry name" value="Prokaryotic type KH domain (KH-domain type II)"/>
    <property type="match status" value="1"/>
</dbReference>
<dbReference type="SUPFAM" id="SSF54821">
    <property type="entry name" value="Ribosomal protein S3 C-terminal domain"/>
    <property type="match status" value="1"/>
</dbReference>
<dbReference type="PROSITE" id="PS50823">
    <property type="entry name" value="KH_TYPE_2"/>
    <property type="match status" value="1"/>
</dbReference>
<dbReference type="PROSITE" id="PS00548">
    <property type="entry name" value="RIBOSOMAL_S3"/>
    <property type="match status" value="1"/>
</dbReference>
<reference key="1">
    <citation type="journal article" date="1995" name="Plant Mol. Biol. Rep.">
        <title>Complete nucleotide sequence of the Porphyra purpurea chloroplast genome.</title>
        <authorList>
            <person name="Reith M.E."/>
            <person name="Munholland J."/>
        </authorList>
    </citation>
    <scope>NUCLEOTIDE SEQUENCE [LARGE SCALE GENOMIC DNA]</scope>
    <source>
        <strain>Avonport</strain>
    </source>
</reference>
<sequence length="230" mass="25631">MGQKIHPLGFRIGITQKHRSSWFASSKDYSVLLQEDHKIRSFIHGKLSNASIAKIEINRKADQVEVLIATARPGIVLGKSGAGIESLRNSLTLILDPNKQIRVNVVEISDPDSEATLVAEFITQQLEKRVAFRRAVRQAVQRAQRANTQGVKIQVSGRLNGAEIARSEWVREGRVPLQTLRADIDYCHRQAHTTYGVLGVKVWLFKGELLPDSKVVELAPSQDQINPDVS</sequence>
<accession>P51308</accession>
<gene>
    <name type="primary">rps3</name>
</gene>
<evidence type="ECO:0000250" key="1"/>
<evidence type="ECO:0000305" key="2"/>
<organism>
    <name type="scientific">Porphyra purpurea</name>
    <name type="common">Red seaweed</name>
    <name type="synonym">Ulva purpurea</name>
    <dbReference type="NCBI Taxonomy" id="2787"/>
    <lineage>
        <taxon>Eukaryota</taxon>
        <taxon>Rhodophyta</taxon>
        <taxon>Bangiophyceae</taxon>
        <taxon>Bangiales</taxon>
        <taxon>Bangiaceae</taxon>
        <taxon>Porphyra</taxon>
    </lineage>
</organism>
<proteinExistence type="inferred from homology"/>
<comment type="subunit">
    <text evidence="1">Part of the 30S ribosomal subunit.</text>
</comment>
<comment type="subcellular location">
    <subcellularLocation>
        <location>Plastid</location>
        <location>Chloroplast</location>
    </subcellularLocation>
</comment>
<comment type="similarity">
    <text evidence="2">Belongs to the universal ribosomal protein uS3 family.</text>
</comment>
<keyword id="KW-0150">Chloroplast</keyword>
<keyword id="KW-0934">Plastid</keyword>
<keyword id="KW-0687">Ribonucleoprotein</keyword>
<keyword id="KW-0689">Ribosomal protein</keyword>
<keyword id="KW-0694">RNA-binding</keyword>
<keyword id="KW-0699">rRNA-binding</keyword>
<protein>
    <recommendedName>
        <fullName evidence="2">Small ribosomal subunit protein uS3c</fullName>
    </recommendedName>
    <alternativeName>
        <fullName>30S ribosomal protein S3, chloroplastic</fullName>
    </alternativeName>
</protein>
<name>RR3_PORPU</name>
<feature type="chain" id="PRO_0000130302" description="Small ribosomal subunit protein uS3c">
    <location>
        <begin position="1"/>
        <end position="230"/>
    </location>
</feature>
<feature type="domain" description="KH type-2">
    <location>
        <begin position="39"/>
        <end position="109"/>
    </location>
</feature>